<reference key="1">
    <citation type="journal article" date="2008" name="PLoS Genet.">
        <title>Genomic islands in the pathogenic filamentous fungus Aspergillus fumigatus.</title>
        <authorList>
            <person name="Fedorova N.D."/>
            <person name="Khaldi N."/>
            <person name="Joardar V.S."/>
            <person name="Maiti R."/>
            <person name="Amedeo P."/>
            <person name="Anderson M.J."/>
            <person name="Crabtree J."/>
            <person name="Silva J.C."/>
            <person name="Badger J.H."/>
            <person name="Albarraq A."/>
            <person name="Angiuoli S."/>
            <person name="Bussey H."/>
            <person name="Bowyer P."/>
            <person name="Cotty P.J."/>
            <person name="Dyer P.S."/>
            <person name="Egan A."/>
            <person name="Galens K."/>
            <person name="Fraser-Liggett C.M."/>
            <person name="Haas B.J."/>
            <person name="Inman J.M."/>
            <person name="Kent R."/>
            <person name="Lemieux S."/>
            <person name="Malavazi I."/>
            <person name="Orvis J."/>
            <person name="Roemer T."/>
            <person name="Ronning C.M."/>
            <person name="Sundaram J.P."/>
            <person name="Sutton G."/>
            <person name="Turner G."/>
            <person name="Venter J.C."/>
            <person name="White O.R."/>
            <person name="Whitty B.R."/>
            <person name="Youngman P."/>
            <person name="Wolfe K.H."/>
            <person name="Goldman G.H."/>
            <person name="Wortman J.R."/>
            <person name="Jiang B."/>
            <person name="Denning D.W."/>
            <person name="Nierman W.C."/>
        </authorList>
    </citation>
    <scope>NUCLEOTIDE SEQUENCE [LARGE SCALE GENOMIC DNA]</scope>
    <source>
        <strain>ATCC 1020 / DSM 3700 / CBS 544.65 / FGSC A1164 / JCM 1740 / NRRL 181 / WB 181</strain>
    </source>
</reference>
<protein>
    <recommendedName>
        <fullName>Putative lipase atg15</fullName>
        <ecNumber>3.1.1.3</ecNumber>
    </recommendedName>
    <alternativeName>
        <fullName>Autophagy-related protein 15</fullName>
    </alternativeName>
</protein>
<sequence length="634" mass="68394">MSISGLLLSVALLPSVVSAHDHVYFDPPSSGSPFLGPQIPLTGPPALTGTHEFTLRHIYQRGTRDQPDLHRRLDIKPHTRLWAVSDDGLEKELVTFDTPLVASSSPLTIQRLADRRLSVIEGYLAAARSSGEAVALSPSEWVMDTLAGPNVTDKESVLTFAKMTANDYIEEPGTEDWHYIHGRFNYSSSFGWQSDGLRGHIYADKTNSTIVISLKGTSPALFDGAGTTTNDKINDNLFFSCCCGQGGSYLWRQVCDCQQSAFTANLTCIVEAMNDENRYYRAAIDLYSNVTDMYPDANVWMTGHSLGGAMSSLLGLTFGLPVVTFEAVPEALPAARLGLPSPPGHDPRLPQSRQYTGAYHFGHTADPVYMGTCNGVGSICTWGGYAMESACHTGQMCVYDTVEDKGWRVALSTHRIRAVISDVLEVYEDLPPCAPEEECYDCELWKFFKSNGSESTTTSTTTTTTAPTTTRTSTCKTPGWWGCLDESTTTTTITSTTTTTTTSTSTCKTPGWFGCKDPTTTTEATPAPSVTTTIPTPTTYPTSSTSTCKDPGWFGCRDPSSTTASITSSPSTTSTCDDPGFFWGCYDESTTATHPITPGPSAPYSTPSPTNKHTCTSSIFFGLICVGSTGTELR</sequence>
<evidence type="ECO:0000250" key="1"/>
<evidence type="ECO:0000250" key="2">
    <source>
        <dbReference type="UniProtKB" id="P25641"/>
    </source>
</evidence>
<evidence type="ECO:0000255" key="3"/>
<evidence type="ECO:0000256" key="4">
    <source>
        <dbReference type="SAM" id="MobiDB-lite"/>
    </source>
</evidence>
<evidence type="ECO:0000305" key="5"/>
<accession>A1DH10</accession>
<dbReference type="EC" id="3.1.1.3"/>
<dbReference type="EMBL" id="DS027696">
    <property type="protein sequence ID" value="EAW18667.1"/>
    <property type="molecule type" value="Genomic_DNA"/>
</dbReference>
<dbReference type="RefSeq" id="XP_001260564.1">
    <property type="nucleotide sequence ID" value="XM_001260563.1"/>
</dbReference>
<dbReference type="STRING" id="331117.A1DH10"/>
<dbReference type="ESTHER" id="neofi-atg15">
    <property type="family name" value="ATG15-related-lipase"/>
</dbReference>
<dbReference type="GlyCosmos" id="A1DH10">
    <property type="glycosylation" value="6 sites, No reported glycans"/>
</dbReference>
<dbReference type="EnsemblFungi" id="EAW18667">
    <property type="protein sequence ID" value="EAW18667"/>
    <property type="gene ID" value="NFIA_086220"/>
</dbReference>
<dbReference type="GeneID" id="4587122"/>
<dbReference type="KEGG" id="nfi:NFIA_086220"/>
<dbReference type="VEuPathDB" id="FungiDB:NFIA_086220"/>
<dbReference type="eggNOG" id="KOG4540">
    <property type="taxonomic scope" value="Eukaryota"/>
</dbReference>
<dbReference type="HOGENOM" id="CLU_028295_0_1_1"/>
<dbReference type="OMA" id="TYHFGHT"/>
<dbReference type="OrthoDB" id="58570at2759"/>
<dbReference type="Proteomes" id="UP000006702">
    <property type="component" value="Unassembled WGS sequence"/>
</dbReference>
<dbReference type="GO" id="GO:0032585">
    <property type="term" value="C:multivesicular body membrane"/>
    <property type="evidence" value="ECO:0007669"/>
    <property type="project" value="UniProtKB-SubCell"/>
</dbReference>
<dbReference type="GO" id="GO:0005775">
    <property type="term" value="C:vacuolar lumen"/>
    <property type="evidence" value="ECO:0007669"/>
    <property type="project" value="TreeGrafter"/>
</dbReference>
<dbReference type="GO" id="GO:0004620">
    <property type="term" value="F:phospholipase activity"/>
    <property type="evidence" value="ECO:0007669"/>
    <property type="project" value="TreeGrafter"/>
</dbReference>
<dbReference type="GO" id="GO:0004806">
    <property type="term" value="F:triacylglycerol lipase activity"/>
    <property type="evidence" value="ECO:0007669"/>
    <property type="project" value="UniProtKB-EC"/>
</dbReference>
<dbReference type="GO" id="GO:0034496">
    <property type="term" value="P:multivesicular body membrane disassembly"/>
    <property type="evidence" value="ECO:0007669"/>
    <property type="project" value="TreeGrafter"/>
</dbReference>
<dbReference type="GO" id="GO:0046461">
    <property type="term" value="P:neutral lipid catabolic process"/>
    <property type="evidence" value="ECO:0007669"/>
    <property type="project" value="TreeGrafter"/>
</dbReference>
<dbReference type="GO" id="GO:0006660">
    <property type="term" value="P:phosphatidylserine catabolic process"/>
    <property type="evidence" value="ECO:0007669"/>
    <property type="project" value="TreeGrafter"/>
</dbReference>
<dbReference type="GO" id="GO:0034727">
    <property type="term" value="P:piecemeal microautophagy of the nucleus"/>
    <property type="evidence" value="ECO:0007669"/>
    <property type="project" value="TreeGrafter"/>
</dbReference>
<dbReference type="CDD" id="cd00519">
    <property type="entry name" value="Lipase_3"/>
    <property type="match status" value="1"/>
</dbReference>
<dbReference type="FunFam" id="3.40.50.1820:FF:000129">
    <property type="entry name" value="Autophagy related lipase Atg15, putative"/>
    <property type="match status" value="1"/>
</dbReference>
<dbReference type="Gene3D" id="3.40.50.1820">
    <property type="entry name" value="alpha/beta hydrolase"/>
    <property type="match status" value="1"/>
</dbReference>
<dbReference type="InterPro" id="IPR029058">
    <property type="entry name" value="AB_hydrolase_fold"/>
</dbReference>
<dbReference type="InterPro" id="IPR050805">
    <property type="entry name" value="ATG15_Lipase"/>
</dbReference>
<dbReference type="InterPro" id="IPR002921">
    <property type="entry name" value="Fungal_lipase-type"/>
</dbReference>
<dbReference type="PANTHER" id="PTHR47175">
    <property type="entry name" value="LIPASE ATG15-RELATED"/>
    <property type="match status" value="1"/>
</dbReference>
<dbReference type="PANTHER" id="PTHR47175:SF2">
    <property type="entry name" value="LIPASE ATG15-RELATED"/>
    <property type="match status" value="1"/>
</dbReference>
<dbReference type="Pfam" id="PF01764">
    <property type="entry name" value="Lipase_3"/>
    <property type="match status" value="1"/>
</dbReference>
<dbReference type="SUPFAM" id="SSF53474">
    <property type="entry name" value="alpha/beta-Hydrolases"/>
    <property type="match status" value="1"/>
</dbReference>
<gene>
    <name type="primary">atg15</name>
    <name type="ORF">NFIA_086220</name>
</gene>
<proteinExistence type="inferred from homology"/>
<keyword id="KW-0072">Autophagy</keyword>
<keyword id="KW-0967">Endosome</keyword>
<keyword id="KW-0325">Glycoprotein</keyword>
<keyword id="KW-0378">Hydrolase</keyword>
<keyword id="KW-0442">Lipid degradation</keyword>
<keyword id="KW-0443">Lipid metabolism</keyword>
<keyword id="KW-0472">Membrane</keyword>
<keyword id="KW-1185">Reference proteome</keyword>
<keyword id="KW-0735">Signal-anchor</keyword>
<keyword id="KW-0812">Transmembrane</keyword>
<keyword id="KW-1133">Transmembrane helix</keyword>
<name>ATG15_NEOFI</name>
<comment type="function">
    <text evidence="1">Lipase which is essential for lysis of subvacuolar cytoplasm to vacuole targeted bodies and intravacuolar autophagic bodies. Involved in the lysis of intravacuolar multivesicular body (MVB) vesicles. The intravacuolar membrane disintegration by atg15 is critical to life span extension (By similarity).</text>
</comment>
<comment type="catalytic activity">
    <reaction>
        <text>a triacylglycerol + H2O = a diacylglycerol + a fatty acid + H(+)</text>
        <dbReference type="Rhea" id="RHEA:12044"/>
        <dbReference type="ChEBI" id="CHEBI:15377"/>
        <dbReference type="ChEBI" id="CHEBI:15378"/>
        <dbReference type="ChEBI" id="CHEBI:17855"/>
        <dbReference type="ChEBI" id="CHEBI:18035"/>
        <dbReference type="ChEBI" id="CHEBI:28868"/>
        <dbReference type="EC" id="3.1.1.3"/>
    </reaction>
</comment>
<comment type="subunit">
    <text evidence="1">Binds to both phosphatidylinositol (PI) and phosphatidylinositol 3,5-bisphosphate (PIP2).</text>
</comment>
<comment type="subcellular location">
    <subcellularLocation>
        <location evidence="2">Endosome</location>
        <location evidence="2">Multivesicular body membrane</location>
        <topology evidence="2">Single-pass type II membrane protein</topology>
    </subcellularLocation>
    <subcellularLocation>
        <location evidence="2">Prevacuolar compartment membrane</location>
        <topology evidence="2">Single-pass type II membrane protein</topology>
    </subcellularLocation>
    <text evidence="2">From ER, targeted to vacuolar lumen at the MVB vesicles via the Golgi and the prevacuolar compartment (PVC).</text>
</comment>
<comment type="similarity">
    <text evidence="5">Belongs to the AB hydrolase superfamily. Lipase family.</text>
</comment>
<organism>
    <name type="scientific">Neosartorya fischeri (strain ATCC 1020 / DSM 3700 / CBS 544.65 / FGSC A1164 / JCM 1740 / NRRL 181 / WB 181)</name>
    <name type="common">Aspergillus fischerianus</name>
    <dbReference type="NCBI Taxonomy" id="331117"/>
    <lineage>
        <taxon>Eukaryota</taxon>
        <taxon>Fungi</taxon>
        <taxon>Dikarya</taxon>
        <taxon>Ascomycota</taxon>
        <taxon>Pezizomycotina</taxon>
        <taxon>Eurotiomycetes</taxon>
        <taxon>Eurotiomycetidae</taxon>
        <taxon>Eurotiales</taxon>
        <taxon>Aspergillaceae</taxon>
        <taxon>Aspergillus</taxon>
        <taxon>Aspergillus subgen. Fumigati</taxon>
    </lineage>
</organism>
<feature type="chain" id="PRO_0000317965" description="Putative lipase atg15">
    <location>
        <begin position="1"/>
        <end position="634"/>
    </location>
</feature>
<feature type="topological domain" description="Cytoplasmic" evidence="1">
    <location>
        <begin position="1"/>
        <end position="4"/>
    </location>
</feature>
<feature type="transmembrane region" description="Helical; Signal-anchor for type II membrane protein">
    <location>
        <begin position="5"/>
        <end position="25"/>
    </location>
</feature>
<feature type="topological domain" description="Lumenal" evidence="1">
    <location>
        <begin position="26"/>
        <end position="634"/>
    </location>
</feature>
<feature type="region of interest" description="Disordered" evidence="4">
    <location>
        <begin position="518"/>
        <end position="544"/>
    </location>
</feature>
<feature type="active site" description="Charge relay system" evidence="1">
    <location>
        <position position="305"/>
    </location>
</feature>
<feature type="glycosylation site" description="N-linked (GlcNAc...) asparagine" evidence="3">
    <location>
        <position position="150"/>
    </location>
</feature>
<feature type="glycosylation site" description="N-linked (GlcNAc...) asparagine" evidence="3">
    <location>
        <position position="185"/>
    </location>
</feature>
<feature type="glycosylation site" description="N-linked (GlcNAc...) asparagine" evidence="3">
    <location>
        <position position="207"/>
    </location>
</feature>
<feature type="glycosylation site" description="N-linked (GlcNAc...) asparagine" evidence="3">
    <location>
        <position position="265"/>
    </location>
</feature>
<feature type="glycosylation site" description="N-linked (GlcNAc...) asparagine" evidence="3">
    <location>
        <position position="289"/>
    </location>
</feature>
<feature type="glycosylation site" description="N-linked (GlcNAc...) asparagine" evidence="3">
    <location>
        <position position="451"/>
    </location>
</feature>